<feature type="chain" id="PRO_0000087541" description="GPN-loop GTPase 1">
    <location>
        <begin position="1"/>
        <end position="355"/>
    </location>
</feature>
<feature type="region of interest" description="Disordered" evidence="4">
    <location>
        <begin position="1"/>
        <end position="30"/>
    </location>
</feature>
<feature type="coiled-coil region" evidence="3">
    <location>
        <begin position="286"/>
        <end position="311"/>
    </location>
</feature>
<feature type="short sequence motif" description="Gly-Pro-Asn (GPN)-loop; involved in dimer interface" evidence="2">
    <location>
        <begin position="97"/>
        <end position="99"/>
    </location>
</feature>
<feature type="compositionally biased region" description="Low complexity" evidence="4">
    <location>
        <begin position="9"/>
        <end position="21"/>
    </location>
</feature>
<feature type="binding site" evidence="2">
    <location>
        <begin position="40"/>
        <end position="45"/>
    </location>
    <ligand>
        <name>GTP</name>
        <dbReference type="ChEBI" id="CHEBI:37565"/>
    </ligand>
</feature>
<feature type="binding site" evidence="2">
    <location>
        <begin position="200"/>
        <end position="203"/>
    </location>
    <ligand>
        <name>GTP</name>
        <dbReference type="ChEBI" id="CHEBI:37565"/>
    </ligand>
</feature>
<feature type="site" description="Stabilizes the phosphate intermediate; shared with dimeric partner" evidence="2">
    <location>
        <position position="99"/>
    </location>
</feature>
<comment type="function">
    <text evidence="1">Small GTPase required for proper nuclear import of RNA polymerase II (RNAPII). May act at an RNAP assembly step prior to nuclear import.</text>
</comment>
<comment type="subunit">
    <text evidence="1">Heterodimer with GPN3. Binds to RNA polymerase II (RNAPII).</text>
</comment>
<comment type="interaction">
    <interactant intactId="EBI-316619">
        <id>P46577</id>
    </interactant>
    <interactant intactId="EBI-316631">
        <id>Q9XW68</id>
        <label>gex-4</label>
    </interactant>
    <organismsDiffer>false</organismsDiffer>
    <experiments>3</experiments>
</comment>
<comment type="subcellular location">
    <subcellularLocation>
        <location evidence="1">Cytoplasm</location>
    </subcellularLocation>
    <subcellularLocation>
        <location evidence="1">Nucleus</location>
    </subcellularLocation>
    <text evidence="1">Shuttles between the nucleus and the cytoplasm.</text>
</comment>
<comment type="similarity">
    <text evidence="5">Belongs to the GPN-loop GTPase family.</text>
</comment>
<gene>
    <name evidence="6" type="primary">gop-2</name>
    <name type="ORF">C34E10.2</name>
</gene>
<evidence type="ECO:0000250" key="1">
    <source>
        <dbReference type="UniProtKB" id="Q9HCN4"/>
    </source>
</evidence>
<evidence type="ECO:0000250" key="2">
    <source>
        <dbReference type="UniProtKB" id="Q9UYR9"/>
    </source>
</evidence>
<evidence type="ECO:0000255" key="3"/>
<evidence type="ECO:0000256" key="4">
    <source>
        <dbReference type="SAM" id="MobiDB-lite"/>
    </source>
</evidence>
<evidence type="ECO:0000305" key="5"/>
<evidence type="ECO:0000312" key="6">
    <source>
        <dbReference type="WormBase" id="C34E10.2"/>
    </source>
</evidence>
<protein>
    <recommendedName>
        <fullName evidence="1">GPN-loop GTPase 1</fullName>
        <ecNumber evidence="1">3.6.5.-</ecNumber>
    </recommendedName>
    <alternativeName>
        <fullName evidence="6">Gro-1 operon protein 2</fullName>
    </alternativeName>
    <alternativeName>
        <fullName evidence="1">XPA-binding protein 1 homolog</fullName>
    </alternativeName>
</protein>
<keyword id="KW-0175">Coiled coil</keyword>
<keyword id="KW-0963">Cytoplasm</keyword>
<keyword id="KW-0342">GTP-binding</keyword>
<keyword id="KW-0378">Hydrolase</keyword>
<keyword id="KW-0547">Nucleotide-binding</keyword>
<keyword id="KW-0539">Nucleus</keyword>
<keyword id="KW-1185">Reference proteome</keyword>
<dbReference type="EC" id="3.6.5.-" evidence="1"/>
<dbReference type="EMBL" id="AY052770">
    <property type="protein sequence ID" value="AAL14109.1"/>
    <property type="molecule type" value="mRNA"/>
</dbReference>
<dbReference type="EMBL" id="FO080774">
    <property type="protein sequence ID" value="CCD66646.1"/>
    <property type="molecule type" value="Genomic_DNA"/>
</dbReference>
<dbReference type="PIR" id="T15759">
    <property type="entry name" value="T15759"/>
</dbReference>
<dbReference type="RefSeq" id="NP_498118.1">
    <property type="nucleotide sequence ID" value="NM_065717.6"/>
</dbReference>
<dbReference type="SMR" id="P46577"/>
<dbReference type="BioGRID" id="40953">
    <property type="interactions" value="7"/>
</dbReference>
<dbReference type="DIP" id="DIP-24754N"/>
<dbReference type="FunCoup" id="P46577">
    <property type="interactions" value="2740"/>
</dbReference>
<dbReference type="IntAct" id="P46577">
    <property type="interactions" value="2"/>
</dbReference>
<dbReference type="STRING" id="6239.C34E10.2.1"/>
<dbReference type="PaxDb" id="6239-C34E10.2"/>
<dbReference type="PeptideAtlas" id="P46577"/>
<dbReference type="EnsemblMetazoa" id="C34E10.2.1">
    <property type="protein sequence ID" value="C34E10.2.1"/>
    <property type="gene ID" value="WBGene00001661"/>
</dbReference>
<dbReference type="GeneID" id="175722"/>
<dbReference type="KEGG" id="cel:CELE_C34E10.2"/>
<dbReference type="UCSC" id="C34E10.2">
    <property type="organism name" value="c. elegans"/>
</dbReference>
<dbReference type="AGR" id="WB:WBGene00001661"/>
<dbReference type="CTD" id="175722"/>
<dbReference type="WormBase" id="C34E10.2">
    <property type="protein sequence ID" value="CE01182"/>
    <property type="gene ID" value="WBGene00001661"/>
    <property type="gene designation" value="gop-2"/>
</dbReference>
<dbReference type="eggNOG" id="KOG1532">
    <property type="taxonomic scope" value="Eukaryota"/>
</dbReference>
<dbReference type="GeneTree" id="ENSGT00950000183172"/>
<dbReference type="HOGENOM" id="CLU_037460_1_0_1"/>
<dbReference type="InParanoid" id="P46577"/>
<dbReference type="OMA" id="MIIVFNK"/>
<dbReference type="OrthoDB" id="243313at2759"/>
<dbReference type="PhylomeDB" id="P46577"/>
<dbReference type="PRO" id="PR:P46577"/>
<dbReference type="Proteomes" id="UP000001940">
    <property type="component" value="Chromosome III"/>
</dbReference>
<dbReference type="GO" id="GO:0005737">
    <property type="term" value="C:cytoplasm"/>
    <property type="evidence" value="ECO:0007669"/>
    <property type="project" value="UniProtKB-SubCell"/>
</dbReference>
<dbReference type="GO" id="GO:0005634">
    <property type="term" value="C:nucleus"/>
    <property type="evidence" value="ECO:0007669"/>
    <property type="project" value="UniProtKB-SubCell"/>
</dbReference>
<dbReference type="GO" id="GO:0005525">
    <property type="term" value="F:GTP binding"/>
    <property type="evidence" value="ECO:0007669"/>
    <property type="project" value="UniProtKB-KW"/>
</dbReference>
<dbReference type="GO" id="GO:0003924">
    <property type="term" value="F:GTPase activity"/>
    <property type="evidence" value="ECO:0000318"/>
    <property type="project" value="GO_Central"/>
</dbReference>
<dbReference type="CDD" id="cd17870">
    <property type="entry name" value="GPN1"/>
    <property type="match status" value="1"/>
</dbReference>
<dbReference type="FunFam" id="3.40.50.300:FF:000888">
    <property type="entry name" value="GPN-loop GTPase 1"/>
    <property type="match status" value="1"/>
</dbReference>
<dbReference type="Gene3D" id="3.40.50.300">
    <property type="entry name" value="P-loop containing nucleotide triphosphate hydrolases"/>
    <property type="match status" value="1"/>
</dbReference>
<dbReference type="InterPro" id="IPR004130">
    <property type="entry name" value="Gpn"/>
</dbReference>
<dbReference type="InterPro" id="IPR030230">
    <property type="entry name" value="Gpn1/Npa3/XAB1"/>
</dbReference>
<dbReference type="InterPro" id="IPR027417">
    <property type="entry name" value="P-loop_NTPase"/>
</dbReference>
<dbReference type="PANTHER" id="PTHR21231:SF8">
    <property type="entry name" value="GPN-LOOP GTPASE 1"/>
    <property type="match status" value="1"/>
</dbReference>
<dbReference type="PANTHER" id="PTHR21231">
    <property type="entry name" value="XPA-BINDING PROTEIN 1-RELATED"/>
    <property type="match status" value="1"/>
</dbReference>
<dbReference type="Pfam" id="PF03029">
    <property type="entry name" value="ATP_bind_1"/>
    <property type="match status" value="1"/>
</dbReference>
<dbReference type="SUPFAM" id="SSF52540">
    <property type="entry name" value="P-loop containing nucleoside triphosphate hydrolases"/>
    <property type="match status" value="1"/>
</dbReference>
<sequence>MAEKAENLPSSSAEASEEPSPQTGPNVNQKPSILVLGMAGSGKTTFVQRLTAFLHARKTPPYVINLDPAVSKVPYPVNVDIRDTVKYKEVMKEFGMGPNGAIMTCLNLMCTRFDKVIELINKRSSDFSVCLLDTPGQIEAFTWSASGSIITDSLASSHPTVVMYIVDSARATNPTTFMSNMLYACSILYRTKLPFIVVFNKADIVKPTFALKWMQDFERFDEALEDARSSYMNDLSRSLSLVLDEFYCGLKTVCVSSATGEGFEDVMTAIDESVEAYKKEYVPMYEKVLAEKKLLDEEERKKRDEETLKGKAVHDLNKVANPDEFLESELNSKIDRIHLGGVDEENEEDAELERS</sequence>
<proteinExistence type="evidence at protein level"/>
<reference key="1">
    <citation type="journal article" date="2001" name="Genetics">
        <title>Regulation of physiological rates in Caenorhabditis elegans by a tRNA-modifying enzyme in the mitochondria.</title>
        <authorList>
            <person name="Lemieux J."/>
            <person name="Lakowski B."/>
            <person name="Webb A."/>
            <person name="Meng Y."/>
            <person name="Ubach A."/>
            <person name="Bussiere F."/>
            <person name="Barnes T."/>
            <person name="Hekimi S."/>
        </authorList>
    </citation>
    <scope>NUCLEOTIDE SEQUENCE [MRNA]</scope>
    <source>
        <strain>Bristol N2</strain>
    </source>
</reference>
<reference key="2">
    <citation type="journal article" date="1998" name="Science">
        <title>Genome sequence of the nematode C. elegans: a platform for investigating biology.</title>
        <authorList>
            <consortium name="The C. elegans sequencing consortium"/>
        </authorList>
    </citation>
    <scope>NUCLEOTIDE SEQUENCE [LARGE SCALE GENOMIC DNA]</scope>
    <source>
        <strain>Bristol N2</strain>
    </source>
</reference>
<organism>
    <name type="scientific">Caenorhabditis elegans</name>
    <dbReference type="NCBI Taxonomy" id="6239"/>
    <lineage>
        <taxon>Eukaryota</taxon>
        <taxon>Metazoa</taxon>
        <taxon>Ecdysozoa</taxon>
        <taxon>Nematoda</taxon>
        <taxon>Chromadorea</taxon>
        <taxon>Rhabditida</taxon>
        <taxon>Rhabditina</taxon>
        <taxon>Rhabditomorpha</taxon>
        <taxon>Rhabditoidea</taxon>
        <taxon>Rhabditidae</taxon>
        <taxon>Peloderinae</taxon>
        <taxon>Caenorhabditis</taxon>
    </lineage>
</organism>
<name>GPN1_CAEEL</name>
<accession>P46577</accession>